<gene>
    <name type="primary">HSP90AA1</name>
    <name type="synonym">HSPCA</name>
</gene>
<sequence>MPEETQTQDQPMEEEEVETFAFQAEIAQLMSLIINTFYSNKEIFLRELISNSSDALDKIRYESLTDPSKLDSGKELHINLIPNKQDRTLTIVDTGIGMTKADLINNLGTIAKSGTKAFMEALQAGADISMIGQFGVGFYSAYLVAEKVTVITKHNDDEQYAWESSAGGSFTVRTDAGEPMGRGTKVVLHLKEDQTEYLEERRIKEIVKKHSQFIGYPITLFVEKERDKEVSDDEAKQPDDKPEIEDVGSDEEEEEKKDGDIDQEELNKTKPIWTRNPDDITNEEYGEFYKSLTNDWEDHLAVKHFSVEGQLEFRALLFVPRRAPFDLFENRKKKNNIKLYVRRVFIMDNCEELIPEYLNFIRGVVDSEDLPLNISREMLQQSKILKVIRKNLVKKCLELFTELAEDKENYKKFYEQFSKNIKLGIHEDSQNRKKLSELLRYYTSASGDEMVSLKDYCTRMKENQKHIYYITGETKDQVANSAFVERLRKHGLEVIYMIEPIDEYCVQQLKEFEGKTLVSVTKEGLELTKFENLCKIMKDILEKKVEKVVVSNRLVTSPCCIVTSTYGWTANMERIMKAQALRDNSTMGYMAAKKHLEVNPDHSIIETLRQKAEADKNDKSVKDLVILLYETALLSSGFSLEDPQTHANRIYRMIKLGLGIDEDDPTADDTAAAVTEEMPPLEGDDDTSRMEEVD</sequence>
<evidence type="ECO:0000250" key="1"/>
<evidence type="ECO:0000250" key="2">
    <source>
        <dbReference type="UniProtKB" id="P07900"/>
    </source>
</evidence>
<evidence type="ECO:0000250" key="3">
    <source>
        <dbReference type="UniProtKB" id="P07901"/>
    </source>
</evidence>
<evidence type="ECO:0000250" key="4">
    <source>
        <dbReference type="UniProtKB" id="P82995"/>
    </source>
</evidence>
<evidence type="ECO:0000256" key="5">
    <source>
        <dbReference type="SAM" id="MobiDB-lite"/>
    </source>
</evidence>
<evidence type="ECO:0000269" key="6">
    <source>
    </source>
</evidence>
<evidence type="ECO:0000269" key="7">
    <source>
    </source>
</evidence>
<evidence type="ECO:0000305" key="8"/>
<comment type="function">
    <text evidence="2">Molecular chaperone that promotes the maturation, structural maintenance and proper regulation of specific target proteins involved for instance in cell cycle control and signal transduction. Undergoes a functional cycle that is linked to its ATPase activity which is essential for its chaperone activity. This cycle probably induces conformational changes in the client proteins, thereby causing their activation. Interacts dynamically with various co-chaperones that modulate its substrate recognition, ATPase cycle and chaperone function. Engages with a range of client protein classes via its interaction with various co-chaperone proteins or complexes, that act as adapters, simultaneously able to interact with the specific client and the central chaperone itself. Recruitment of ATP and co-chaperone followed by client protein forms a functional chaperone. After the completion of the chaperoning process, properly folded client protein and co-chaperone leave HSP90 in an ADP-bound partially open conformation and finally, ADP is released from HSP90 which acquires an open conformation for the next cycle. Plays a critical role in mitochondrial import, delivers preproteins to the mitochondrial import receptor TOMM70. Apart from its chaperone activity, it also plays a role in the regulation of the transcription machinery. HSP90 and its co-chaperones modulate transcription at least at three different levels. In the first place, they alter the steady-state levels of certain transcription factors in response to various physiological cues. Second, they modulate the activity of certain epigenetic modifiers, such as histone deacetylases or DNA methyl transferases, and thereby respond to the change in the environment. Third, they participate in the eviction of histones from the promoter region of certain genes and thereby turn on gene expression. Binds bacterial lipopolysaccharide (LPS) and mediates LPS-induced inflammatory response, including TNF secretion by monocytes. Antagonizes STUB1-mediated inhibition of TGF-beta signaling via inhibition of STUB1-mediated SMAD3 ubiquitination and degradation. Mediates the association of TOMM70 with IRF3 or TBK1 in mitochondrial outer membrane which promotes host antiviral response.</text>
</comment>
<comment type="catalytic activity">
    <reaction evidence="2">
        <text>ATP + H2O = ADP + phosphate + H(+)</text>
        <dbReference type="Rhea" id="RHEA:13065"/>
        <dbReference type="ChEBI" id="CHEBI:15377"/>
        <dbReference type="ChEBI" id="CHEBI:15378"/>
        <dbReference type="ChEBI" id="CHEBI:30616"/>
        <dbReference type="ChEBI" id="CHEBI:43474"/>
        <dbReference type="ChEBI" id="CHEBI:456216"/>
        <dbReference type="EC" id="3.6.4.10"/>
    </reaction>
</comment>
<comment type="activity regulation">
    <text evidence="2">In the resting state, through the dimerization of its C-terminal domain, HSP90 forms a homodimer which is defined as the open conformation. Upon ATP-binding, the N-terminal domain undergoes significant conformational changes and comes in contact to form an active closed conformation. After HSP90 finishes its chaperoning tasks of assisting the proper folding, stabilization and activation of client proteins under the active state, ATP molecule is hydrolyzed to ADP which then dissociates from HSP90 and directs the protein back to the resting state. Co-chaperone TSC1 promotes ATP binding and inhibits HSP90AA1 ATPase activity. Binding to phosphorylated AHSA1 promotes HSP90AA1 ATPase activity. Inhibited by geldanamycin, Ganetespib (STA-9090) and SNX-2112.</text>
</comment>
<comment type="subunit">
    <text evidence="2 3 4 7">Homodimer (By similarity). Identified in NR3C1/GCR steroid receptor-chaperone complexes formed at least by NR3C1, HSP90AA1 and a variety of proteins containing TPR repeats such as FKBP4, FKBP5, PPID, PPP5C or STIP1 (PubMed:9195923). Forms a complex containing HSP90AA1, TSC1 and TSC2; TSC1 is required to recruit TCS2 to the complex (By similarity). The closed form interacts (via the middle domain and TPR repeat-binding motif) with co-chaperone TSC1 (via C-terminus) (By similarity). Interacts with TOM34 (By similarity). Interacts with TERT; the interaction, together with PTGES3, is required for correct assembly and stabilization of the TERT holoenzyme complex (By similarity). Interacts with CHORDC1 and DNAJC7 (By similarity). Interacts with STUB1 and UBE2N; may couple the chaperone and ubiquitination systems (By similarity). Interacts (via TPR repeat-binding motif) with PPP5C (via TPR repeats); the interaction is direct and activates PPP5C phosphatase activity (By similarity). Following LPS binding, may form a complex with CXCR4, GDF5 and HSPA8 (By similarity). Interacts with KSR1 (By similarity). Interacts with co-chaperone CDC37 (via C-terminus); the interaction inhibits HSP90AA1 ATPase activity (By similarity). May interact with NWD1 (By similarity). Interacts with FNIP1 and FNIP2; the interaction inhibits HSP90AA1 ATPase activity (By similarity). Interacts with co-chaperone AHSA1 (phosphorylated on 'Tyr-223'); the interaction activates HSP90AA1 ATPase activity and results in the dissociation of TSC1 from HSP90AA1 (By similarity). Interacts with FLCN in the presence of FNIP1 (By similarity). Interacts with HSP70, STIP1 and PTGES3 (By similarity). Interacts with SMYD3; this interaction enhances SMYD3 histone-lysine N-methyltransferase. Interacts with SGTA (via TPR repeats) (By similarity). Interacts with TTC1 (via TPR repeats) (By similarity). Interacts with HSF1 in an ATP-dependent manner (By similarity). Interacts with MET; the interaction suppresses MET kinase activity (By similarity). Interacts with ERBB2 in an ATP-dependent manner; the interaction suppresses ERBB2 kinase activity (By similarity). Interacts with HIF1A, KEAP1 and RHOBTB2 (By similarity). Interacts with HSF1; this interaction is decreased in a IER5-dependent manner, promoting HSF1 accumulation in the nucleus, homotrimerization and DNA-binding activities (By similarity). Interacts with STUB1 and SMAD3 (By similarity). Interacts with HSP90AB1; interaction is constitutive (By similarity). Interacts with HECTD1 (via N-terminus) (By similarity). Interacts with NR3C1 (via domain NR LBD) and NR1D1 (via domain NR LBD) (By similarity). Interacts with NLPR12. Interacts with PDCL3 (By similarity). Interacts with TOMM70; the interaction is required for preprotein mitochondrial import. Interacts with TOMM70, IRF3 and TBK1; the interactions are direct and mediate the association of TOMM70 with IRF3 and TBK1 (By similarity). Forms a complex with ASL, ASS1 and NOS2; the complex regulates cell-autonomous L-arginine synthesis and citrulline recycling while channeling extracellular L-arginine to nitric oxide synthesis pathway.</text>
</comment>
<comment type="subcellular location">
    <subcellularLocation>
        <location evidence="3">Nucleus</location>
    </subcellularLocation>
    <subcellularLocation>
        <location evidence="3">Cytoplasm</location>
    </subcellularLocation>
    <subcellularLocation>
        <location evidence="2">Melanosome</location>
    </subcellularLocation>
    <subcellularLocation>
        <location evidence="2">Cell membrane</location>
    </subcellularLocation>
    <subcellularLocation>
        <location evidence="2">Mitochondrion</location>
    </subcellularLocation>
</comment>
<comment type="domain">
    <text evidence="2">The TPR repeat-binding motif mediates interaction with TPR repeat-containing proteins like the co-chaperone STUB1.</text>
</comment>
<comment type="PTM">
    <text evidence="2">ISGylated.</text>
</comment>
<comment type="PTM">
    <text evidence="2">S-nitrosylated; negatively regulates the ATPase activity and the activation of eNOS by HSP90AA1.</text>
</comment>
<comment type="PTM">
    <text evidence="3">Ubiquitinated via 'Lys-63'-linked polyubiquitination by HECTD1. Ubiquitination promotes translocation into the cytoplasm away from the membrane and secretory pathways.</text>
</comment>
<comment type="similarity">
    <text evidence="8">Belongs to the heat shock protein 90 family.</text>
</comment>
<dbReference type="EC" id="3.6.4.10" evidence="2"/>
<dbReference type="PIR" id="A34461">
    <property type="entry name" value="A34461"/>
</dbReference>
<dbReference type="BMRB" id="P30946"/>
<dbReference type="SMR" id="P30946"/>
<dbReference type="CORUM" id="P30946"/>
<dbReference type="FunCoup" id="P30946">
    <property type="interactions" value="1246"/>
</dbReference>
<dbReference type="STRING" id="9986.ENSOCUP00000036544"/>
<dbReference type="iPTMnet" id="P30946"/>
<dbReference type="PaxDb" id="9986-ENSOCUP00000001106"/>
<dbReference type="eggNOG" id="KOG0019">
    <property type="taxonomic scope" value="Eukaryota"/>
</dbReference>
<dbReference type="InParanoid" id="P30946"/>
<dbReference type="TreeFam" id="TF300686"/>
<dbReference type="Proteomes" id="UP000001811">
    <property type="component" value="Unplaced"/>
</dbReference>
<dbReference type="GO" id="GO:0005737">
    <property type="term" value="C:cytoplasm"/>
    <property type="evidence" value="ECO:0000250"/>
    <property type="project" value="AgBase"/>
</dbReference>
<dbReference type="GO" id="GO:0042470">
    <property type="term" value="C:melanosome"/>
    <property type="evidence" value="ECO:0007669"/>
    <property type="project" value="UniProtKB-SubCell"/>
</dbReference>
<dbReference type="GO" id="GO:0005739">
    <property type="term" value="C:mitochondrion"/>
    <property type="evidence" value="ECO:0000250"/>
    <property type="project" value="UniProtKB"/>
</dbReference>
<dbReference type="GO" id="GO:0005634">
    <property type="term" value="C:nucleus"/>
    <property type="evidence" value="ECO:0000250"/>
    <property type="project" value="AgBase"/>
</dbReference>
<dbReference type="GO" id="GO:0005886">
    <property type="term" value="C:plasma membrane"/>
    <property type="evidence" value="ECO:0007669"/>
    <property type="project" value="UniProtKB-SubCell"/>
</dbReference>
<dbReference type="GO" id="GO:0005524">
    <property type="term" value="F:ATP binding"/>
    <property type="evidence" value="ECO:0000250"/>
    <property type="project" value="UniProtKB"/>
</dbReference>
<dbReference type="GO" id="GO:0016887">
    <property type="term" value="F:ATP hydrolysis activity"/>
    <property type="evidence" value="ECO:0007669"/>
    <property type="project" value="InterPro"/>
</dbReference>
<dbReference type="GO" id="GO:0140662">
    <property type="term" value="F:ATP-dependent protein folding chaperone"/>
    <property type="evidence" value="ECO:0007669"/>
    <property type="project" value="InterPro"/>
</dbReference>
<dbReference type="GO" id="GO:0051219">
    <property type="term" value="F:phosphoprotein binding"/>
    <property type="evidence" value="ECO:0000353"/>
    <property type="project" value="AgBase"/>
</dbReference>
<dbReference type="GO" id="GO:0051082">
    <property type="term" value="F:unfolded protein binding"/>
    <property type="evidence" value="ECO:0007669"/>
    <property type="project" value="InterPro"/>
</dbReference>
<dbReference type="GO" id="GO:0002218">
    <property type="term" value="P:activation of innate immune response"/>
    <property type="evidence" value="ECO:0000250"/>
    <property type="project" value="UniProtKB"/>
</dbReference>
<dbReference type="GO" id="GO:0098586">
    <property type="term" value="P:cellular response to virus"/>
    <property type="evidence" value="ECO:0000250"/>
    <property type="project" value="UniProtKB"/>
</dbReference>
<dbReference type="GO" id="GO:0002230">
    <property type="term" value="P:positive regulation of defense response to virus by host"/>
    <property type="evidence" value="ECO:0000250"/>
    <property type="project" value="UniProtKB"/>
</dbReference>
<dbReference type="GO" id="GO:0032728">
    <property type="term" value="P:positive regulation of interferon-beta production"/>
    <property type="evidence" value="ECO:0000250"/>
    <property type="project" value="UniProtKB"/>
</dbReference>
<dbReference type="GO" id="GO:0042981">
    <property type="term" value="P:regulation of apoptotic process"/>
    <property type="evidence" value="ECO:0000250"/>
    <property type="project" value="UniProtKB"/>
</dbReference>
<dbReference type="GO" id="GO:0046677">
    <property type="term" value="P:response to antibiotic"/>
    <property type="evidence" value="ECO:0000250"/>
    <property type="project" value="AgBase"/>
</dbReference>
<dbReference type="GO" id="GO:0009409">
    <property type="term" value="P:response to cold"/>
    <property type="evidence" value="ECO:0000250"/>
    <property type="project" value="AgBase"/>
</dbReference>
<dbReference type="GO" id="GO:0009408">
    <property type="term" value="P:response to heat"/>
    <property type="evidence" value="ECO:0000250"/>
    <property type="project" value="AgBase"/>
</dbReference>
<dbReference type="CDD" id="cd16927">
    <property type="entry name" value="HATPase_Hsp90-like"/>
    <property type="match status" value="1"/>
</dbReference>
<dbReference type="FunFam" id="1.20.120.790:FF:000001">
    <property type="entry name" value="Heat shock protein 90 alpha"/>
    <property type="match status" value="1"/>
</dbReference>
<dbReference type="FunFam" id="3.30.230.80:FF:000001">
    <property type="entry name" value="Heat shock protein 90 alpha"/>
    <property type="match status" value="1"/>
</dbReference>
<dbReference type="FunFam" id="3.40.50.11260:FF:000001">
    <property type="entry name" value="Heat shock protein 90 alpha"/>
    <property type="match status" value="1"/>
</dbReference>
<dbReference type="FunFam" id="3.30.565.10:FF:000204">
    <property type="entry name" value="Heat shock protein HSP 90-beta"/>
    <property type="match status" value="1"/>
</dbReference>
<dbReference type="Gene3D" id="3.30.230.80">
    <property type="match status" value="1"/>
</dbReference>
<dbReference type="Gene3D" id="3.40.50.11260">
    <property type="match status" value="1"/>
</dbReference>
<dbReference type="Gene3D" id="1.20.120.790">
    <property type="entry name" value="Heat shock protein 90, C-terminal domain"/>
    <property type="match status" value="1"/>
</dbReference>
<dbReference type="Gene3D" id="3.30.565.10">
    <property type="entry name" value="Histidine kinase-like ATPase, C-terminal domain"/>
    <property type="match status" value="1"/>
</dbReference>
<dbReference type="HAMAP" id="MF_00505">
    <property type="entry name" value="HSP90"/>
    <property type="match status" value="1"/>
</dbReference>
<dbReference type="InterPro" id="IPR036890">
    <property type="entry name" value="HATPase_C_sf"/>
</dbReference>
<dbReference type="InterPro" id="IPR019805">
    <property type="entry name" value="Heat_shock_protein_90_CS"/>
</dbReference>
<dbReference type="InterPro" id="IPR037196">
    <property type="entry name" value="HSP90_C"/>
</dbReference>
<dbReference type="InterPro" id="IPR001404">
    <property type="entry name" value="Hsp90_fam"/>
</dbReference>
<dbReference type="InterPro" id="IPR020575">
    <property type="entry name" value="Hsp90_N"/>
</dbReference>
<dbReference type="InterPro" id="IPR020568">
    <property type="entry name" value="Ribosomal_Su5_D2-typ_SF"/>
</dbReference>
<dbReference type="NCBIfam" id="NF003555">
    <property type="entry name" value="PRK05218.1"/>
    <property type="match status" value="1"/>
</dbReference>
<dbReference type="PANTHER" id="PTHR11528">
    <property type="entry name" value="HEAT SHOCK PROTEIN 90 FAMILY MEMBER"/>
    <property type="match status" value="1"/>
</dbReference>
<dbReference type="Pfam" id="PF13589">
    <property type="entry name" value="HATPase_c_3"/>
    <property type="match status" value="1"/>
</dbReference>
<dbReference type="Pfam" id="PF00183">
    <property type="entry name" value="HSP90"/>
    <property type="match status" value="1"/>
</dbReference>
<dbReference type="PIRSF" id="PIRSF002583">
    <property type="entry name" value="Hsp90"/>
    <property type="match status" value="1"/>
</dbReference>
<dbReference type="PRINTS" id="PR00775">
    <property type="entry name" value="HEATSHOCK90"/>
</dbReference>
<dbReference type="SMART" id="SM00387">
    <property type="entry name" value="HATPase_c"/>
    <property type="match status" value="1"/>
</dbReference>
<dbReference type="SUPFAM" id="SSF55874">
    <property type="entry name" value="ATPase domain of HSP90 chaperone/DNA topoisomerase II/histidine kinase"/>
    <property type="match status" value="1"/>
</dbReference>
<dbReference type="SUPFAM" id="SSF110942">
    <property type="entry name" value="HSP90 C-terminal domain"/>
    <property type="match status" value="1"/>
</dbReference>
<dbReference type="SUPFAM" id="SSF54211">
    <property type="entry name" value="Ribosomal protein S5 domain 2-like"/>
    <property type="match status" value="1"/>
</dbReference>
<dbReference type="PROSITE" id="PS00298">
    <property type="entry name" value="HSP90"/>
    <property type="match status" value="1"/>
</dbReference>
<name>HS90A_RABIT</name>
<organism>
    <name type="scientific">Oryctolagus cuniculus</name>
    <name type="common">Rabbit</name>
    <dbReference type="NCBI Taxonomy" id="9986"/>
    <lineage>
        <taxon>Eukaryota</taxon>
        <taxon>Metazoa</taxon>
        <taxon>Chordata</taxon>
        <taxon>Craniata</taxon>
        <taxon>Vertebrata</taxon>
        <taxon>Euteleostomi</taxon>
        <taxon>Mammalia</taxon>
        <taxon>Eutheria</taxon>
        <taxon>Euarchontoglires</taxon>
        <taxon>Glires</taxon>
        <taxon>Lagomorpha</taxon>
        <taxon>Leporidae</taxon>
        <taxon>Oryctolagus</taxon>
    </lineage>
</organism>
<protein>
    <recommendedName>
        <fullName>Heat shock protein HSP 90-alpha</fullName>
        <ecNumber evidence="2">3.6.4.10</ecNumber>
    </recommendedName>
</protein>
<accession>P30946</accession>
<reference key="1">
    <citation type="journal article" date="1989" name="J. Biol. Chem.">
        <title>The human double-stranded DNA-activated protein kinase phosphorylates the 90-kDa heat-shock protein, hsp90 alpha at two NH2-terminal threonine residues.</title>
        <authorList>
            <person name="Lees-Miller S.P."/>
            <person name="Anderson C.W."/>
        </authorList>
    </citation>
    <scope>PROTEIN SEQUENCE OF 2-41</scope>
    <scope>PHOSPHORYLATION AT THR-5 AND THR-7 BY PRKDC</scope>
</reference>
<reference key="2">
    <citation type="journal article" date="1997" name="J. Biol. Chem.">
        <title>Protein phosphatase 5 is a major component of glucocorticoid receptor.hsp90 complexes with properties of an FK506-binding immunophilin.</title>
        <authorList>
            <person name="Silverstein A.M."/>
            <person name="Galigniana M.D."/>
            <person name="Chen M.S."/>
            <person name="Owens-Grillo J.K."/>
            <person name="Chinkers M."/>
            <person name="Pratt W.B."/>
        </authorList>
    </citation>
    <scope>IDENTIFICATION IN A COMPLEX WITH NR3C1 AND FKBP4; PPID; PPP5C OR STIP1</scope>
</reference>
<keyword id="KW-0007">Acetylation</keyword>
<keyword id="KW-0067">ATP-binding</keyword>
<keyword id="KW-1003">Cell membrane</keyword>
<keyword id="KW-0143">Chaperone</keyword>
<keyword id="KW-0963">Cytoplasm</keyword>
<keyword id="KW-0903">Direct protein sequencing</keyword>
<keyword id="KW-0378">Hydrolase</keyword>
<keyword id="KW-0472">Membrane</keyword>
<keyword id="KW-0496">Mitochondrion</keyword>
<keyword id="KW-0547">Nucleotide-binding</keyword>
<keyword id="KW-0539">Nucleus</keyword>
<keyword id="KW-0597">Phosphoprotein</keyword>
<keyword id="KW-1185">Reference proteome</keyword>
<keyword id="KW-0702">S-nitrosylation</keyword>
<keyword id="KW-0346">Stress response</keyword>
<keyword id="KW-0832">Ubl conjugation</keyword>
<proteinExistence type="evidence at protein level"/>
<feature type="initiator methionine" description="Removed" evidence="2">
    <location>
        <position position="1"/>
    </location>
</feature>
<feature type="chain" id="PRO_0000409818" description="Heat shock protein HSP 90-alpha" evidence="1">
    <location>
        <begin position="2"/>
        <end position="694"/>
    </location>
</feature>
<feature type="region of interest" description="Interaction with NR3C1" evidence="3">
    <location>
        <begin position="9"/>
        <end position="236"/>
    </location>
</feature>
<feature type="region of interest" description="Disordered" evidence="5">
    <location>
        <begin position="228"/>
        <end position="275"/>
    </location>
</feature>
<feature type="region of interest" description="Interaction with NR3C1" evidence="3">
    <location>
        <begin position="258"/>
        <end position="578"/>
    </location>
</feature>
<feature type="region of interest" description="Interaction with FLCN and FNIP1" evidence="2">
    <location>
        <begin position="261"/>
        <end position="694"/>
    </location>
</feature>
<feature type="region of interest" description="Interaction with FNIP2 and TSC1" evidence="2">
    <location>
        <begin position="261"/>
        <end position="582"/>
    </location>
</feature>
<feature type="region of interest" description="Interaction with NR1D1" evidence="3">
    <location>
        <begin position="590"/>
        <end position="693"/>
    </location>
</feature>
<feature type="region of interest" description="Required for homodimerization" evidence="2">
    <location>
        <begin position="644"/>
        <end position="694"/>
    </location>
</feature>
<feature type="region of interest" description="Disordered" evidence="5">
    <location>
        <begin position="662"/>
        <end position="694"/>
    </location>
</feature>
<feature type="region of interest" description="Essential for interaction with SMYD3, TSC1 and STIP1/HOP" evidence="2">
    <location>
        <begin position="690"/>
        <end position="694"/>
    </location>
</feature>
<feature type="region of interest" description="Essential for interaction with SGTA and TTC1" evidence="2">
    <location>
        <begin position="691"/>
        <end position="694"/>
    </location>
</feature>
<feature type="short sequence motif" description="TPR repeat-binding" evidence="2">
    <location>
        <begin position="685"/>
        <end position="694"/>
    </location>
</feature>
<feature type="compositionally biased region" description="Basic and acidic residues" evidence="5">
    <location>
        <begin position="228"/>
        <end position="241"/>
    </location>
</feature>
<feature type="compositionally biased region" description="Acidic residues" evidence="5">
    <location>
        <begin position="242"/>
        <end position="255"/>
    </location>
</feature>
<feature type="compositionally biased region" description="Basic and acidic residues" evidence="5">
    <location>
        <begin position="256"/>
        <end position="268"/>
    </location>
</feature>
<feature type="compositionally biased region" description="Low complexity" evidence="5">
    <location>
        <begin position="668"/>
        <end position="677"/>
    </location>
</feature>
<feature type="binding site" evidence="1">
    <location>
        <position position="51"/>
    </location>
    <ligand>
        <name>ATP</name>
        <dbReference type="ChEBI" id="CHEBI:30616"/>
    </ligand>
</feature>
<feature type="binding site" evidence="1">
    <location>
        <position position="93"/>
    </location>
    <ligand>
        <name>ATP</name>
        <dbReference type="ChEBI" id="CHEBI:30616"/>
    </ligand>
</feature>
<feature type="binding site" evidence="1">
    <location>
        <position position="112"/>
    </location>
    <ligand>
        <name>ATP</name>
        <dbReference type="ChEBI" id="CHEBI:30616"/>
    </ligand>
</feature>
<feature type="binding site" evidence="1">
    <location>
        <position position="138"/>
    </location>
    <ligand>
        <name>ATP</name>
        <dbReference type="ChEBI" id="CHEBI:30616"/>
    </ligand>
</feature>
<feature type="binding site" evidence="1">
    <location>
        <position position="376"/>
    </location>
    <ligand>
        <name>ATP</name>
        <dbReference type="ChEBI" id="CHEBI:30616"/>
    </ligand>
</feature>
<feature type="modified residue" description="Phosphothreonine; by PRKDC" evidence="6">
    <location>
        <position position="5"/>
    </location>
</feature>
<feature type="modified residue" description="Phosphothreonine; by PRKDC" evidence="6">
    <location>
        <position position="7"/>
    </location>
</feature>
<feature type="modified residue" description="N6-acetyllysine" evidence="3">
    <location>
        <position position="58"/>
    </location>
</feature>
<feature type="modified residue" description="N6-acetyllysine" evidence="3">
    <location>
        <position position="84"/>
    </location>
</feature>
<feature type="modified residue" description="Phosphoserine" evidence="2">
    <location>
        <position position="231"/>
    </location>
</feature>
<feature type="modified residue" description="Phosphoserine" evidence="2">
    <location>
        <position position="249"/>
    </location>
</feature>
<feature type="modified residue" description="Phosphotyrosine" evidence="3">
    <location>
        <position position="289"/>
    </location>
</feature>
<feature type="modified residue" description="N6-acetyllysine" evidence="2">
    <location>
        <position position="419"/>
    </location>
</feature>
<feature type="modified residue" description="Phosphoserine" evidence="4">
    <location>
        <position position="429"/>
    </location>
</feature>
<feature type="modified residue" description="N6-acetyllysine" evidence="2">
    <location>
        <position position="434"/>
    </location>
</feature>
<feature type="modified residue" description="Phosphoserine" evidence="2">
    <location>
        <position position="452"/>
    </location>
</feature>
<feature type="modified residue" description="N6-acetyllysine" evidence="2">
    <location>
        <position position="465"/>
    </location>
</feature>
<feature type="modified residue" description="Phosphotyrosine" evidence="3">
    <location>
        <position position="468"/>
    </location>
</feature>
<feature type="modified residue" description="N6-acetyllysine" evidence="2">
    <location>
        <position position="547"/>
    </location>
</feature>
<feature type="modified residue" description="S-nitrosocysteine" evidence="2">
    <location>
        <position position="560"/>
    </location>
</feature>
<feature type="modified residue" description="Phosphoserine" evidence="2">
    <location>
        <position position="603"/>
    </location>
</feature>